<dbReference type="EMBL" id="AJ719715">
    <property type="protein sequence ID" value="CAG31374.1"/>
    <property type="molecule type" value="mRNA"/>
</dbReference>
<dbReference type="RefSeq" id="NP_001007936.1">
    <property type="nucleotide sequence ID" value="NM_001007935.2"/>
</dbReference>
<dbReference type="SMR" id="Q5ZLL9"/>
<dbReference type="FunCoup" id="Q5ZLL9">
    <property type="interactions" value="1844"/>
</dbReference>
<dbReference type="STRING" id="9031.ENSGALP00000016398"/>
<dbReference type="PaxDb" id="9031-ENSGALP00000016398"/>
<dbReference type="GeneID" id="423328"/>
<dbReference type="KEGG" id="gga:423328"/>
<dbReference type="CTD" id="84312"/>
<dbReference type="VEuPathDB" id="HostDB:geneid_423328"/>
<dbReference type="eggNOG" id="KOG4466">
    <property type="taxonomic scope" value="Eukaryota"/>
</dbReference>
<dbReference type="HOGENOM" id="CLU_050862_2_0_1"/>
<dbReference type="InParanoid" id="Q5ZLL9"/>
<dbReference type="OMA" id="XIYRELC"/>
<dbReference type="OrthoDB" id="20886at2759"/>
<dbReference type="PhylomeDB" id="Q5ZLL9"/>
<dbReference type="PRO" id="PR:Q5ZLL9"/>
<dbReference type="Proteomes" id="UP000000539">
    <property type="component" value="Unassembled WGS sequence"/>
</dbReference>
<dbReference type="GO" id="GO:0070822">
    <property type="term" value="C:Sin3-type complex"/>
    <property type="evidence" value="ECO:0000318"/>
    <property type="project" value="GO_Central"/>
</dbReference>
<dbReference type="GO" id="GO:0042826">
    <property type="term" value="F:histone deacetylase binding"/>
    <property type="evidence" value="ECO:0000318"/>
    <property type="project" value="GO_Central"/>
</dbReference>
<dbReference type="GO" id="GO:0000122">
    <property type="term" value="P:negative regulation of transcription by RNA polymerase II"/>
    <property type="evidence" value="ECO:0000318"/>
    <property type="project" value="GO_Central"/>
</dbReference>
<dbReference type="FunFam" id="1.20.5.1500:FF:000002">
    <property type="entry name" value="breast cancer metastasis-suppressor 1-like protein-A"/>
    <property type="match status" value="1"/>
</dbReference>
<dbReference type="Gene3D" id="1.20.5.1500">
    <property type="match status" value="1"/>
</dbReference>
<dbReference type="InterPro" id="IPR013907">
    <property type="entry name" value="Sds3"/>
</dbReference>
<dbReference type="PANTHER" id="PTHR21964">
    <property type="entry name" value="BREAST CANCER METASTASIS-SUPPRESSOR 1"/>
    <property type="match status" value="1"/>
</dbReference>
<dbReference type="Pfam" id="PF08598">
    <property type="entry name" value="Sds3"/>
    <property type="match status" value="1"/>
</dbReference>
<dbReference type="SMART" id="SM01401">
    <property type="entry name" value="Sds3"/>
    <property type="match status" value="1"/>
</dbReference>
<gene>
    <name type="primary">BRMS1L</name>
    <name type="ORF">RCJMB04_5j5</name>
</gene>
<comment type="function">
    <text evidence="1">Involved in the histone deacetylase (HDAC1)-dependent transcriptional repression activity.</text>
</comment>
<comment type="subcellular location">
    <subcellularLocation>
        <location evidence="1">Nucleus</location>
    </subcellularLocation>
</comment>
<comment type="similarity">
    <text evidence="4">Belongs to the BRMS1 family.</text>
</comment>
<name>BRM1L_CHICK</name>
<keyword id="KW-0175">Coiled coil</keyword>
<keyword id="KW-0539">Nucleus</keyword>
<keyword id="KW-1185">Reference proteome</keyword>
<keyword id="KW-0678">Repressor</keyword>
<keyword id="KW-0804">Transcription</keyword>
<keyword id="KW-0805">Transcription regulation</keyword>
<proteinExistence type="evidence at transcript level"/>
<evidence type="ECO:0000250" key="1"/>
<evidence type="ECO:0000255" key="2"/>
<evidence type="ECO:0000256" key="3">
    <source>
        <dbReference type="SAM" id="MobiDB-lite"/>
    </source>
</evidence>
<evidence type="ECO:0000305" key="4"/>
<protein>
    <recommendedName>
        <fullName>Breast cancer metastasis-suppressor 1-like protein</fullName>
    </recommendedName>
</protein>
<sequence length="323" mass="37766">MPVHSREKKENNHDEMEVDYGENEGSTSEEEETESSSVSEEGDSSEMDDEDCERRRMECLDEMSNLEKQFTDLKDQLYKERLSQVDAKLQEVIAGKAPEYLEPLAALQENMQIRTKVAGIYRELCLESVKNKYECEIQASRQHCESEKLLLYDTVQSELEEKIRRLEEDRHSIDITSELWNDELQSRKKRKDPFSPDKKKPVVVSGPYIVYMLQDLDILEDWTTIRKAMATLGPHRVKPEPPVKLEKHLHSARSEEGRLYYDGEWYGRGQTIYIDKKDECPTSAIITTINHDEVWFKRPDGSKSKLYISQLQKGKYSIKHNHN</sequence>
<feature type="chain" id="PRO_0000305311" description="Breast cancer metastasis-suppressor 1-like protein">
    <location>
        <begin position="1"/>
        <end position="323"/>
    </location>
</feature>
<feature type="region of interest" description="Disordered" evidence="3">
    <location>
        <begin position="1"/>
        <end position="56"/>
    </location>
</feature>
<feature type="coiled-coil region" evidence="2">
    <location>
        <begin position="50"/>
        <end position="82"/>
    </location>
</feature>
<feature type="coiled-coil region" evidence="2">
    <location>
        <begin position="147"/>
        <end position="178"/>
    </location>
</feature>
<feature type="compositionally biased region" description="Basic and acidic residues" evidence="3">
    <location>
        <begin position="1"/>
        <end position="15"/>
    </location>
</feature>
<feature type="compositionally biased region" description="Acidic residues" evidence="3">
    <location>
        <begin position="16"/>
        <end position="51"/>
    </location>
</feature>
<organism>
    <name type="scientific">Gallus gallus</name>
    <name type="common">Chicken</name>
    <dbReference type="NCBI Taxonomy" id="9031"/>
    <lineage>
        <taxon>Eukaryota</taxon>
        <taxon>Metazoa</taxon>
        <taxon>Chordata</taxon>
        <taxon>Craniata</taxon>
        <taxon>Vertebrata</taxon>
        <taxon>Euteleostomi</taxon>
        <taxon>Archelosauria</taxon>
        <taxon>Archosauria</taxon>
        <taxon>Dinosauria</taxon>
        <taxon>Saurischia</taxon>
        <taxon>Theropoda</taxon>
        <taxon>Coelurosauria</taxon>
        <taxon>Aves</taxon>
        <taxon>Neognathae</taxon>
        <taxon>Galloanserae</taxon>
        <taxon>Galliformes</taxon>
        <taxon>Phasianidae</taxon>
        <taxon>Phasianinae</taxon>
        <taxon>Gallus</taxon>
    </lineage>
</organism>
<reference key="1">
    <citation type="journal article" date="2005" name="Genome Biol.">
        <title>Full-length cDNAs from chicken bursal lymphocytes to facilitate gene function analysis.</title>
        <authorList>
            <person name="Caldwell R.B."/>
            <person name="Kierzek A.M."/>
            <person name="Arakawa H."/>
            <person name="Bezzubov Y."/>
            <person name="Zaim J."/>
            <person name="Fiedler P."/>
            <person name="Kutter S."/>
            <person name="Blagodatski A."/>
            <person name="Kostovska D."/>
            <person name="Koter M."/>
            <person name="Plachy J."/>
            <person name="Carninci P."/>
            <person name="Hayashizaki Y."/>
            <person name="Buerstedde J.-M."/>
        </authorList>
    </citation>
    <scope>NUCLEOTIDE SEQUENCE [LARGE SCALE MRNA]</scope>
    <source>
        <strain>CB</strain>
        <tissue>Bursa of Fabricius</tissue>
    </source>
</reference>
<accession>Q5ZLL9</accession>